<accession>Q3Z7V0</accession>
<proteinExistence type="inferred from homology"/>
<protein>
    <recommendedName>
        <fullName evidence="1">Adenylosuccinate synthetase</fullName>
        <shortName evidence="1">AMPSase</shortName>
        <shortName evidence="1">AdSS</shortName>
        <ecNumber evidence="1">6.3.4.4</ecNumber>
    </recommendedName>
    <alternativeName>
        <fullName evidence="1">IMP--aspartate ligase</fullName>
    </alternativeName>
</protein>
<dbReference type="EC" id="6.3.4.4" evidence="1"/>
<dbReference type="EMBL" id="CP000027">
    <property type="protein sequence ID" value="AAW39818.1"/>
    <property type="molecule type" value="Genomic_DNA"/>
</dbReference>
<dbReference type="RefSeq" id="WP_010936678.1">
    <property type="nucleotide sequence ID" value="NC_002936.3"/>
</dbReference>
<dbReference type="SMR" id="Q3Z7V0"/>
<dbReference type="FunCoup" id="Q3Z7V0">
    <property type="interactions" value="346"/>
</dbReference>
<dbReference type="STRING" id="243164.DET0976"/>
<dbReference type="GeneID" id="3229780"/>
<dbReference type="KEGG" id="det:DET0976"/>
<dbReference type="eggNOG" id="COG0104">
    <property type="taxonomic scope" value="Bacteria"/>
</dbReference>
<dbReference type="HOGENOM" id="CLU_029848_0_0_0"/>
<dbReference type="InParanoid" id="Q3Z7V0"/>
<dbReference type="UniPathway" id="UPA00075">
    <property type="reaction ID" value="UER00335"/>
</dbReference>
<dbReference type="Proteomes" id="UP000008289">
    <property type="component" value="Chromosome"/>
</dbReference>
<dbReference type="GO" id="GO:0005737">
    <property type="term" value="C:cytoplasm"/>
    <property type="evidence" value="ECO:0007669"/>
    <property type="project" value="UniProtKB-SubCell"/>
</dbReference>
<dbReference type="GO" id="GO:0004019">
    <property type="term" value="F:adenylosuccinate synthase activity"/>
    <property type="evidence" value="ECO:0007669"/>
    <property type="project" value="UniProtKB-UniRule"/>
</dbReference>
<dbReference type="GO" id="GO:0005525">
    <property type="term" value="F:GTP binding"/>
    <property type="evidence" value="ECO:0007669"/>
    <property type="project" value="UniProtKB-UniRule"/>
</dbReference>
<dbReference type="GO" id="GO:0000287">
    <property type="term" value="F:magnesium ion binding"/>
    <property type="evidence" value="ECO:0007669"/>
    <property type="project" value="UniProtKB-UniRule"/>
</dbReference>
<dbReference type="GO" id="GO:0044208">
    <property type="term" value="P:'de novo' AMP biosynthetic process"/>
    <property type="evidence" value="ECO:0007669"/>
    <property type="project" value="UniProtKB-UniRule"/>
</dbReference>
<dbReference type="GO" id="GO:0046040">
    <property type="term" value="P:IMP metabolic process"/>
    <property type="evidence" value="ECO:0007669"/>
    <property type="project" value="TreeGrafter"/>
</dbReference>
<dbReference type="CDD" id="cd03108">
    <property type="entry name" value="AdSS"/>
    <property type="match status" value="1"/>
</dbReference>
<dbReference type="FunFam" id="1.10.300.10:FF:000001">
    <property type="entry name" value="Adenylosuccinate synthetase"/>
    <property type="match status" value="1"/>
</dbReference>
<dbReference type="FunFam" id="3.90.170.10:FF:000001">
    <property type="entry name" value="Adenylosuccinate synthetase"/>
    <property type="match status" value="1"/>
</dbReference>
<dbReference type="Gene3D" id="3.40.440.10">
    <property type="entry name" value="Adenylosuccinate Synthetase, subunit A, domain 1"/>
    <property type="match status" value="1"/>
</dbReference>
<dbReference type="Gene3D" id="1.10.300.10">
    <property type="entry name" value="Adenylosuccinate Synthetase, subunit A, domain 2"/>
    <property type="match status" value="1"/>
</dbReference>
<dbReference type="Gene3D" id="3.90.170.10">
    <property type="entry name" value="Adenylosuccinate Synthetase, subunit A, domain 3"/>
    <property type="match status" value="1"/>
</dbReference>
<dbReference type="HAMAP" id="MF_00011">
    <property type="entry name" value="Adenylosucc_synth"/>
    <property type="match status" value="1"/>
</dbReference>
<dbReference type="InterPro" id="IPR018220">
    <property type="entry name" value="Adenylosuccin_syn_GTP-bd"/>
</dbReference>
<dbReference type="InterPro" id="IPR042109">
    <property type="entry name" value="Adenylosuccinate_synth_dom1"/>
</dbReference>
<dbReference type="InterPro" id="IPR042110">
    <property type="entry name" value="Adenylosuccinate_synth_dom2"/>
</dbReference>
<dbReference type="InterPro" id="IPR042111">
    <property type="entry name" value="Adenylosuccinate_synth_dom3"/>
</dbReference>
<dbReference type="InterPro" id="IPR001114">
    <property type="entry name" value="Adenylosuccinate_synthetase"/>
</dbReference>
<dbReference type="InterPro" id="IPR027417">
    <property type="entry name" value="P-loop_NTPase"/>
</dbReference>
<dbReference type="NCBIfam" id="NF002223">
    <property type="entry name" value="PRK01117.1"/>
    <property type="match status" value="1"/>
</dbReference>
<dbReference type="NCBIfam" id="TIGR00184">
    <property type="entry name" value="purA"/>
    <property type="match status" value="1"/>
</dbReference>
<dbReference type="PANTHER" id="PTHR11846">
    <property type="entry name" value="ADENYLOSUCCINATE SYNTHETASE"/>
    <property type="match status" value="1"/>
</dbReference>
<dbReference type="PANTHER" id="PTHR11846:SF0">
    <property type="entry name" value="ADENYLOSUCCINATE SYNTHETASE"/>
    <property type="match status" value="1"/>
</dbReference>
<dbReference type="Pfam" id="PF00709">
    <property type="entry name" value="Adenylsucc_synt"/>
    <property type="match status" value="1"/>
</dbReference>
<dbReference type="SMART" id="SM00788">
    <property type="entry name" value="Adenylsucc_synt"/>
    <property type="match status" value="1"/>
</dbReference>
<dbReference type="SUPFAM" id="SSF52540">
    <property type="entry name" value="P-loop containing nucleoside triphosphate hydrolases"/>
    <property type="match status" value="1"/>
</dbReference>
<dbReference type="PROSITE" id="PS01266">
    <property type="entry name" value="ADENYLOSUCCIN_SYN_1"/>
    <property type="match status" value="1"/>
</dbReference>
<evidence type="ECO:0000255" key="1">
    <source>
        <dbReference type="HAMAP-Rule" id="MF_00011"/>
    </source>
</evidence>
<gene>
    <name evidence="1" type="primary">purA</name>
    <name type="ordered locus">DET0976</name>
</gene>
<feature type="chain" id="PRO_0000224272" description="Adenylosuccinate synthetase">
    <location>
        <begin position="1"/>
        <end position="423"/>
    </location>
</feature>
<feature type="active site" description="Proton acceptor" evidence="1">
    <location>
        <position position="13"/>
    </location>
</feature>
<feature type="active site" description="Proton donor" evidence="1">
    <location>
        <position position="41"/>
    </location>
</feature>
<feature type="binding site" evidence="1">
    <location>
        <begin position="12"/>
        <end position="18"/>
    </location>
    <ligand>
        <name>GTP</name>
        <dbReference type="ChEBI" id="CHEBI:37565"/>
    </ligand>
</feature>
<feature type="binding site" description="in other chain" evidence="1">
    <location>
        <begin position="13"/>
        <end position="16"/>
    </location>
    <ligand>
        <name>IMP</name>
        <dbReference type="ChEBI" id="CHEBI:58053"/>
        <note>ligand shared between dimeric partners</note>
    </ligand>
</feature>
<feature type="binding site" evidence="1">
    <location>
        <position position="13"/>
    </location>
    <ligand>
        <name>Mg(2+)</name>
        <dbReference type="ChEBI" id="CHEBI:18420"/>
    </ligand>
</feature>
<feature type="binding site" description="in other chain" evidence="1">
    <location>
        <begin position="38"/>
        <end position="41"/>
    </location>
    <ligand>
        <name>IMP</name>
        <dbReference type="ChEBI" id="CHEBI:58053"/>
        <note>ligand shared between dimeric partners</note>
    </ligand>
</feature>
<feature type="binding site" evidence="1">
    <location>
        <begin position="40"/>
        <end position="42"/>
    </location>
    <ligand>
        <name>GTP</name>
        <dbReference type="ChEBI" id="CHEBI:37565"/>
    </ligand>
</feature>
<feature type="binding site" evidence="1">
    <location>
        <position position="40"/>
    </location>
    <ligand>
        <name>Mg(2+)</name>
        <dbReference type="ChEBI" id="CHEBI:18420"/>
    </ligand>
</feature>
<feature type="binding site" description="in other chain" evidence="1">
    <location>
        <position position="128"/>
    </location>
    <ligand>
        <name>IMP</name>
        <dbReference type="ChEBI" id="CHEBI:58053"/>
        <note>ligand shared between dimeric partners</note>
    </ligand>
</feature>
<feature type="binding site" evidence="1">
    <location>
        <position position="142"/>
    </location>
    <ligand>
        <name>IMP</name>
        <dbReference type="ChEBI" id="CHEBI:58053"/>
        <note>ligand shared between dimeric partners</note>
    </ligand>
</feature>
<feature type="binding site" description="in other chain" evidence="1">
    <location>
        <position position="223"/>
    </location>
    <ligand>
        <name>IMP</name>
        <dbReference type="ChEBI" id="CHEBI:58053"/>
        <note>ligand shared between dimeric partners</note>
    </ligand>
</feature>
<feature type="binding site" description="in other chain" evidence="1">
    <location>
        <position position="238"/>
    </location>
    <ligand>
        <name>IMP</name>
        <dbReference type="ChEBI" id="CHEBI:58053"/>
        <note>ligand shared between dimeric partners</note>
    </ligand>
</feature>
<feature type="binding site" evidence="1">
    <location>
        <begin position="298"/>
        <end position="304"/>
    </location>
    <ligand>
        <name>substrate</name>
    </ligand>
</feature>
<feature type="binding site" description="in other chain" evidence="1">
    <location>
        <position position="302"/>
    </location>
    <ligand>
        <name>IMP</name>
        <dbReference type="ChEBI" id="CHEBI:58053"/>
        <note>ligand shared between dimeric partners</note>
    </ligand>
</feature>
<feature type="binding site" evidence="1">
    <location>
        <position position="304"/>
    </location>
    <ligand>
        <name>GTP</name>
        <dbReference type="ChEBI" id="CHEBI:37565"/>
    </ligand>
</feature>
<feature type="binding site" evidence="1">
    <location>
        <begin position="330"/>
        <end position="332"/>
    </location>
    <ligand>
        <name>GTP</name>
        <dbReference type="ChEBI" id="CHEBI:37565"/>
    </ligand>
</feature>
<feature type="binding site" evidence="1">
    <location>
        <begin position="412"/>
        <end position="414"/>
    </location>
    <ligand>
        <name>GTP</name>
        <dbReference type="ChEBI" id="CHEBI:37565"/>
    </ligand>
</feature>
<reference key="1">
    <citation type="journal article" date="2005" name="Science">
        <title>Genome sequence of the PCE-dechlorinating bacterium Dehalococcoides ethenogenes.</title>
        <authorList>
            <person name="Seshadri R."/>
            <person name="Adrian L."/>
            <person name="Fouts D.E."/>
            <person name="Eisen J.A."/>
            <person name="Phillippy A.M."/>
            <person name="Methe B.A."/>
            <person name="Ward N.L."/>
            <person name="Nelson W.C."/>
            <person name="DeBoy R.T."/>
            <person name="Khouri H.M."/>
            <person name="Kolonay J.F."/>
            <person name="Dodson R.J."/>
            <person name="Daugherty S.C."/>
            <person name="Brinkac L.M."/>
            <person name="Sullivan S.A."/>
            <person name="Madupu R."/>
            <person name="Nelson K.E."/>
            <person name="Kang K.H."/>
            <person name="Impraim M."/>
            <person name="Tran K."/>
            <person name="Robinson J.M."/>
            <person name="Forberger H.A."/>
            <person name="Fraser C.M."/>
            <person name="Zinder S.H."/>
            <person name="Heidelberg J.F."/>
        </authorList>
    </citation>
    <scope>NUCLEOTIDE SEQUENCE [LARGE SCALE GENOMIC DNA]</scope>
    <source>
        <strain>ATCC BAA-2266 / KCTC 15142 / 195</strain>
    </source>
</reference>
<sequence length="423" mass="46237">MPVTAIVGGQWGDEGKGKVVDMLAQEADYVVRFSGGDNAGHTVINPMGEFKLHIIPSGVFYPGVKCIIGNGVVINPDVFIRERNELISRGVDVKNVFISDRAHLVLPYHILLDGLEEEARGNKSLGTTRRGIGPAFVDKYARMGIRVGDLLLPEYLHERLEYVLECKNQILTKVYDAAPISLDEIYETCLKWGKELAPNIKETTHIIEEAISQDKKIIMEGAQGALLDPDFGTYPYGTSSSPLAAGGCLGIGIGPASVSATLGVFKAYSTRVGGGPMPTELLDKTGDIIRDEAHEYGTTTGRPRRIGWFDAVAGRFSCQINGMTTAIMTRLDIMDILPAISICTAYELNGKIIKYFPANSGELAKCKPVYEEMPGWLCSTKEVRCYDDLPLAAKNYICRIEELIGCQMSAVCIGPSREQTIYK</sequence>
<name>PURA_DEHM1</name>
<comment type="function">
    <text evidence="1">Plays an important role in the de novo pathway of purine nucleotide biosynthesis. Catalyzes the first committed step in the biosynthesis of AMP from IMP.</text>
</comment>
<comment type="catalytic activity">
    <reaction evidence="1">
        <text>IMP + L-aspartate + GTP = N(6)-(1,2-dicarboxyethyl)-AMP + GDP + phosphate + 2 H(+)</text>
        <dbReference type="Rhea" id="RHEA:15753"/>
        <dbReference type="ChEBI" id="CHEBI:15378"/>
        <dbReference type="ChEBI" id="CHEBI:29991"/>
        <dbReference type="ChEBI" id="CHEBI:37565"/>
        <dbReference type="ChEBI" id="CHEBI:43474"/>
        <dbReference type="ChEBI" id="CHEBI:57567"/>
        <dbReference type="ChEBI" id="CHEBI:58053"/>
        <dbReference type="ChEBI" id="CHEBI:58189"/>
        <dbReference type="EC" id="6.3.4.4"/>
    </reaction>
</comment>
<comment type="cofactor">
    <cofactor evidence="1">
        <name>Mg(2+)</name>
        <dbReference type="ChEBI" id="CHEBI:18420"/>
    </cofactor>
    <text evidence="1">Binds 1 Mg(2+) ion per subunit.</text>
</comment>
<comment type="pathway">
    <text evidence="1">Purine metabolism; AMP biosynthesis via de novo pathway; AMP from IMP: step 1/2.</text>
</comment>
<comment type="subunit">
    <text evidence="1">Homodimer.</text>
</comment>
<comment type="subcellular location">
    <subcellularLocation>
        <location evidence="1">Cytoplasm</location>
    </subcellularLocation>
</comment>
<comment type="similarity">
    <text evidence="1">Belongs to the adenylosuccinate synthetase family.</text>
</comment>
<organism>
    <name type="scientific">Dehalococcoides mccartyi (strain ATCC BAA-2266 / KCTC 15142 / 195)</name>
    <name type="common">Dehalococcoides ethenogenes (strain 195)</name>
    <dbReference type="NCBI Taxonomy" id="243164"/>
    <lineage>
        <taxon>Bacteria</taxon>
        <taxon>Bacillati</taxon>
        <taxon>Chloroflexota</taxon>
        <taxon>Dehalococcoidia</taxon>
        <taxon>Dehalococcoidales</taxon>
        <taxon>Dehalococcoidaceae</taxon>
        <taxon>Dehalococcoides</taxon>
    </lineage>
</organism>
<keyword id="KW-0963">Cytoplasm</keyword>
<keyword id="KW-0342">GTP-binding</keyword>
<keyword id="KW-0436">Ligase</keyword>
<keyword id="KW-0460">Magnesium</keyword>
<keyword id="KW-0479">Metal-binding</keyword>
<keyword id="KW-0547">Nucleotide-binding</keyword>
<keyword id="KW-0658">Purine biosynthesis</keyword>